<proteinExistence type="inferred from homology"/>
<keyword id="KW-0378">Hydrolase</keyword>
<keyword id="KW-0460">Magnesium</keyword>
<keyword id="KW-0479">Metal-binding</keyword>
<keyword id="KW-0546">Nucleotide metabolism</keyword>
<keyword id="KW-1185">Reference proteome</keyword>
<sequence>MKKKVNIRILDKRFGKEFFLPKYFTDGSSGMDLRACIDKEINLNPNETVLISTGVSIDISDQKISGLILPRSGLSHKYGIILSNTIGLIDSDYQGPIMISMLNRSNKNFLISIGDRIAQIIFVPLIQIEWNIVNKFVKITNRKDMGFGHSGKN</sequence>
<evidence type="ECO:0000255" key="1">
    <source>
        <dbReference type="HAMAP-Rule" id="MF_00116"/>
    </source>
</evidence>
<gene>
    <name evidence="1" type="primary">dut</name>
    <name type="ordered locus">WIGBR4010</name>
</gene>
<accession>Q8D2F3</accession>
<organism>
    <name type="scientific">Wigglesworthia glossinidia brevipalpis</name>
    <dbReference type="NCBI Taxonomy" id="36870"/>
    <lineage>
        <taxon>Bacteria</taxon>
        <taxon>Pseudomonadati</taxon>
        <taxon>Pseudomonadota</taxon>
        <taxon>Gammaproteobacteria</taxon>
        <taxon>Enterobacterales</taxon>
        <taxon>Erwiniaceae</taxon>
        <taxon>Wigglesworthia</taxon>
    </lineage>
</organism>
<name>DUT_WIGBR</name>
<comment type="function">
    <text evidence="1">This enzyme is involved in nucleotide metabolism: it produces dUMP, the immediate precursor of thymidine nucleotides and it decreases the intracellular concentration of dUTP so that uracil cannot be incorporated into DNA.</text>
</comment>
<comment type="catalytic activity">
    <reaction evidence="1">
        <text>dUTP + H2O = dUMP + diphosphate + H(+)</text>
        <dbReference type="Rhea" id="RHEA:10248"/>
        <dbReference type="ChEBI" id="CHEBI:15377"/>
        <dbReference type="ChEBI" id="CHEBI:15378"/>
        <dbReference type="ChEBI" id="CHEBI:33019"/>
        <dbReference type="ChEBI" id="CHEBI:61555"/>
        <dbReference type="ChEBI" id="CHEBI:246422"/>
        <dbReference type="EC" id="3.6.1.23"/>
    </reaction>
</comment>
<comment type="cofactor">
    <cofactor evidence="1">
        <name>Mg(2+)</name>
        <dbReference type="ChEBI" id="CHEBI:18420"/>
    </cofactor>
</comment>
<comment type="pathway">
    <text evidence="1">Pyrimidine metabolism; dUMP biosynthesis; dUMP from dCTP (dUTP route): step 2/2.</text>
</comment>
<comment type="similarity">
    <text evidence="1">Belongs to the dUTPase family.</text>
</comment>
<dbReference type="EC" id="3.6.1.23" evidence="1"/>
<dbReference type="EMBL" id="BA000021">
    <property type="protein sequence ID" value="BAC24547.1"/>
    <property type="molecule type" value="Genomic_DNA"/>
</dbReference>
<dbReference type="SMR" id="Q8D2F3"/>
<dbReference type="STRING" id="36870.gene:10368902"/>
<dbReference type="KEGG" id="wbr:dut"/>
<dbReference type="eggNOG" id="COG0756">
    <property type="taxonomic scope" value="Bacteria"/>
</dbReference>
<dbReference type="HOGENOM" id="CLU_068508_1_1_6"/>
<dbReference type="OrthoDB" id="9809956at2"/>
<dbReference type="UniPathway" id="UPA00610">
    <property type="reaction ID" value="UER00666"/>
</dbReference>
<dbReference type="Proteomes" id="UP000000562">
    <property type="component" value="Chromosome"/>
</dbReference>
<dbReference type="GO" id="GO:0004170">
    <property type="term" value="F:dUTP diphosphatase activity"/>
    <property type="evidence" value="ECO:0007669"/>
    <property type="project" value="UniProtKB-UniRule"/>
</dbReference>
<dbReference type="GO" id="GO:0000287">
    <property type="term" value="F:magnesium ion binding"/>
    <property type="evidence" value="ECO:0007669"/>
    <property type="project" value="UniProtKB-UniRule"/>
</dbReference>
<dbReference type="GO" id="GO:0006226">
    <property type="term" value="P:dUMP biosynthetic process"/>
    <property type="evidence" value="ECO:0007669"/>
    <property type="project" value="UniProtKB-UniRule"/>
</dbReference>
<dbReference type="GO" id="GO:0046081">
    <property type="term" value="P:dUTP catabolic process"/>
    <property type="evidence" value="ECO:0007669"/>
    <property type="project" value="InterPro"/>
</dbReference>
<dbReference type="CDD" id="cd07557">
    <property type="entry name" value="trimeric_dUTPase"/>
    <property type="match status" value="1"/>
</dbReference>
<dbReference type="FunFam" id="2.70.40.10:FF:000002">
    <property type="entry name" value="dUTP diphosphatase"/>
    <property type="match status" value="1"/>
</dbReference>
<dbReference type="Gene3D" id="2.70.40.10">
    <property type="match status" value="1"/>
</dbReference>
<dbReference type="HAMAP" id="MF_00116">
    <property type="entry name" value="dUTPase_bact"/>
    <property type="match status" value="1"/>
</dbReference>
<dbReference type="InterPro" id="IPR008181">
    <property type="entry name" value="dUTPase"/>
</dbReference>
<dbReference type="InterPro" id="IPR029054">
    <property type="entry name" value="dUTPase-like"/>
</dbReference>
<dbReference type="InterPro" id="IPR036157">
    <property type="entry name" value="dUTPase-like_sf"/>
</dbReference>
<dbReference type="InterPro" id="IPR033704">
    <property type="entry name" value="dUTPase_trimeric"/>
</dbReference>
<dbReference type="NCBIfam" id="TIGR00576">
    <property type="entry name" value="dut"/>
    <property type="match status" value="1"/>
</dbReference>
<dbReference type="NCBIfam" id="NF001862">
    <property type="entry name" value="PRK00601.1"/>
    <property type="match status" value="1"/>
</dbReference>
<dbReference type="PANTHER" id="PTHR11241">
    <property type="entry name" value="DEOXYURIDINE 5'-TRIPHOSPHATE NUCLEOTIDOHYDROLASE"/>
    <property type="match status" value="1"/>
</dbReference>
<dbReference type="PANTHER" id="PTHR11241:SF0">
    <property type="entry name" value="DEOXYURIDINE 5'-TRIPHOSPHATE NUCLEOTIDOHYDROLASE"/>
    <property type="match status" value="1"/>
</dbReference>
<dbReference type="Pfam" id="PF00692">
    <property type="entry name" value="dUTPase"/>
    <property type="match status" value="1"/>
</dbReference>
<dbReference type="SUPFAM" id="SSF51283">
    <property type="entry name" value="dUTPase-like"/>
    <property type="match status" value="1"/>
</dbReference>
<reference key="1">
    <citation type="journal article" date="2002" name="Nat. Genet.">
        <title>Genome sequence of the endocellular obligate symbiont of tsetse flies, Wigglesworthia glossinidia.</title>
        <authorList>
            <person name="Akman L."/>
            <person name="Yamashita A."/>
            <person name="Watanabe H."/>
            <person name="Oshima K."/>
            <person name="Shiba T."/>
            <person name="Hattori M."/>
            <person name="Aksoy S."/>
        </authorList>
    </citation>
    <scope>NUCLEOTIDE SEQUENCE [LARGE SCALE GENOMIC DNA]</scope>
</reference>
<feature type="chain" id="PRO_0000182916" description="Deoxyuridine 5'-triphosphate nucleotidohydrolase">
    <location>
        <begin position="1"/>
        <end position="153"/>
    </location>
</feature>
<feature type="binding site" evidence="1">
    <location>
        <begin position="71"/>
        <end position="73"/>
    </location>
    <ligand>
        <name>substrate</name>
    </ligand>
</feature>
<feature type="binding site" evidence="1">
    <location>
        <position position="84"/>
    </location>
    <ligand>
        <name>substrate</name>
    </ligand>
</feature>
<feature type="binding site" evidence="1">
    <location>
        <begin position="88"/>
        <end position="90"/>
    </location>
    <ligand>
        <name>substrate</name>
    </ligand>
</feature>
<feature type="binding site" evidence="1">
    <location>
        <position position="98"/>
    </location>
    <ligand>
        <name>substrate</name>
    </ligand>
</feature>
<protein>
    <recommendedName>
        <fullName evidence="1">Deoxyuridine 5'-triphosphate nucleotidohydrolase</fullName>
        <shortName evidence="1">dUTPase</shortName>
        <ecNumber evidence="1">3.6.1.23</ecNumber>
    </recommendedName>
    <alternativeName>
        <fullName evidence="1">dUTP pyrophosphatase</fullName>
    </alternativeName>
</protein>